<accession>A0A087WT01</accession>
<gene>
    <name evidence="10" type="primary">TRAV27</name>
</gene>
<feature type="signal peptide" evidence="1">
    <location>
        <begin position="1"/>
        <end position="19"/>
    </location>
</feature>
<feature type="chain" id="PRO_5001831878" description="T cell receptor alpha variable 27" evidence="1">
    <location>
        <begin position="20"/>
        <end position="109"/>
    </location>
</feature>
<feature type="domain" description="Ig-like" evidence="2">
    <location>
        <begin position="20"/>
        <end position="109" status="greater than"/>
    </location>
</feature>
<feature type="glycosylation site" description="N-linked (GlcNAc...) asparagine" evidence="1">
    <location>
        <position position="36"/>
    </location>
</feature>
<feature type="glycosylation site" description="N-linked (GlcNAc...) asparagine" evidence="1">
    <location>
        <position position="42"/>
    </location>
</feature>
<feature type="disulfide bond" evidence="2 4 12 13">
    <location>
        <begin position="41"/>
        <end position="107"/>
    </location>
</feature>
<feature type="non-terminal residue">
    <location>
        <position position="109"/>
    </location>
</feature>
<feature type="strand" evidence="14">
    <location>
        <begin position="23"/>
        <end position="25"/>
    </location>
</feature>
<feature type="strand" evidence="14">
    <location>
        <begin position="27"/>
        <end position="32"/>
    </location>
</feature>
<feature type="strand" evidence="14">
    <location>
        <begin position="37"/>
        <end position="42"/>
    </location>
</feature>
<feature type="strand" evidence="14">
    <location>
        <begin position="50"/>
        <end position="55"/>
    </location>
</feature>
<feature type="strand" evidence="14">
    <location>
        <begin position="62"/>
        <end position="67"/>
    </location>
</feature>
<feature type="strand" evidence="14">
    <location>
        <begin position="73"/>
        <end position="76"/>
    </location>
</feature>
<feature type="strand" evidence="14">
    <location>
        <begin position="79"/>
        <end position="83"/>
    </location>
</feature>
<feature type="strand" evidence="14">
    <location>
        <begin position="87"/>
        <end position="96"/>
    </location>
</feature>
<feature type="helix" evidence="14">
    <location>
        <begin position="99"/>
        <end position="101"/>
    </location>
</feature>
<feature type="strand" evidence="14">
    <location>
        <begin position="103"/>
        <end position="109"/>
    </location>
</feature>
<reference key="1">
    <citation type="journal article" date="2003" name="Nature">
        <title>The DNA sequence and analysis of human chromosome 14.</title>
        <authorList>
            <person name="Heilig R."/>
            <person name="Eckenberg R."/>
            <person name="Petit J.-L."/>
            <person name="Fonknechten N."/>
            <person name="Da Silva C."/>
            <person name="Cattolico L."/>
            <person name="Levy M."/>
            <person name="Barbe V."/>
            <person name="De Berardinis V."/>
            <person name="Ureta-Vidal A."/>
            <person name="Pelletier E."/>
            <person name="Vico V."/>
            <person name="Anthouard V."/>
            <person name="Rowen L."/>
            <person name="Madan A."/>
            <person name="Qin S."/>
            <person name="Sun H."/>
            <person name="Du H."/>
            <person name="Pepin K."/>
            <person name="Artiguenave F."/>
            <person name="Robert C."/>
            <person name="Cruaud C."/>
            <person name="Bruels T."/>
            <person name="Jaillon O."/>
            <person name="Friedlander L."/>
            <person name="Samson G."/>
            <person name="Brottier P."/>
            <person name="Cure S."/>
            <person name="Segurens B."/>
            <person name="Aniere F."/>
            <person name="Samain S."/>
            <person name="Crespeau H."/>
            <person name="Abbasi N."/>
            <person name="Aiach N."/>
            <person name="Boscus D."/>
            <person name="Dickhoff R."/>
            <person name="Dors M."/>
            <person name="Dubois I."/>
            <person name="Friedman C."/>
            <person name="Gouyvenoux M."/>
            <person name="James R."/>
            <person name="Madan A."/>
            <person name="Mairey-Estrada B."/>
            <person name="Mangenot S."/>
            <person name="Martins N."/>
            <person name="Menard M."/>
            <person name="Oztas S."/>
            <person name="Ratcliffe A."/>
            <person name="Shaffer T."/>
            <person name="Trask B."/>
            <person name="Vacherie B."/>
            <person name="Bellemere C."/>
            <person name="Belser C."/>
            <person name="Besnard-Gonnet M."/>
            <person name="Bartol-Mavel D."/>
            <person name="Boutard M."/>
            <person name="Briez-Silla S."/>
            <person name="Combette S."/>
            <person name="Dufosse-Laurent V."/>
            <person name="Ferron C."/>
            <person name="Lechaplais C."/>
            <person name="Louesse C."/>
            <person name="Muselet D."/>
            <person name="Magdelenat G."/>
            <person name="Pateau E."/>
            <person name="Petit E."/>
            <person name="Sirvain-Trukniewicz P."/>
            <person name="Trybou A."/>
            <person name="Vega-Czarny N."/>
            <person name="Bataille E."/>
            <person name="Bluet E."/>
            <person name="Bordelais I."/>
            <person name="Dubois M."/>
            <person name="Dumont C."/>
            <person name="Guerin T."/>
            <person name="Haffray S."/>
            <person name="Hammadi R."/>
            <person name="Muanga J."/>
            <person name="Pellouin V."/>
            <person name="Robert D."/>
            <person name="Wunderle E."/>
            <person name="Gauguet G."/>
            <person name="Roy A."/>
            <person name="Sainte-Marthe L."/>
            <person name="Verdier J."/>
            <person name="Verdier-Discala C."/>
            <person name="Hillier L.W."/>
            <person name="Fulton L."/>
            <person name="McPherson J."/>
            <person name="Matsuda F."/>
            <person name="Wilson R."/>
            <person name="Scarpelli C."/>
            <person name="Gyapay G."/>
            <person name="Wincker P."/>
            <person name="Saurin W."/>
            <person name="Quetier F."/>
            <person name="Waterston R."/>
            <person name="Hood L."/>
            <person name="Weissenbach J."/>
        </authorList>
    </citation>
    <scope>NUCLEOTIDE SEQUENCE [LARGE SCALE GENOMIC DNA] (IMGT ALLELE TRAV27*03)</scope>
</reference>
<reference key="2">
    <citation type="book" date="2001" name="The T Cell Receptor FactsBook.">
        <title>The T Cell Receptor FactsBook.</title>
        <editorList>
            <person name="Lefranc M.P."/>
            <person name="Lefranc G."/>
        </editorList>
        <authorList>
            <person name="Lefranc M.P."/>
            <person name="Lefranc G."/>
        </authorList>
    </citation>
    <scope>NOMENCLATURE</scope>
</reference>
<reference key="3">
    <citation type="journal article" date="2004" name="Nat. Rev. Immunol.">
        <title>The many important facets of T-cell repertoire diversity.</title>
        <authorList>
            <person name="Nikolich-Zugich J."/>
            <person name="Slifka M.K."/>
            <person name="Messaoudi I."/>
        </authorList>
    </citation>
    <scope>REVIEW ON T CELL REPERTOIRE DIVERSITY</scope>
</reference>
<reference key="4">
    <citation type="journal article" date="2010" name="Cold Spring Harb. Perspect. Biol.">
        <title>Structural biology of the T-cell receptor: insights into receptor assembly, ligand recognition, and initiation of signaling.</title>
        <authorList>
            <person name="Wucherpfennig K.W."/>
            <person name="Gagnon E."/>
            <person name="Call M.J."/>
            <person name="Huseby E.S."/>
            <person name="Call M.E."/>
        </authorList>
    </citation>
    <scope>REVIEW ON T CELL RECEPTOR-CD3 COMPLEX ASSEMBLY</scope>
    <scope>SUBCELLULAR LOCATION</scope>
</reference>
<reference key="5">
    <citation type="journal article" date="2010" name="Nat. Commun.">
        <title>The structure of superantigen complexed with TCR and MHC reveals novel insights into superantigenic T cell activation.</title>
        <authorList>
            <person name="Saline M."/>
            <person name="Roedstroem K.E."/>
            <person name="Fischer G."/>
            <person name="Orekhov V.Y."/>
            <person name="Karlsson B.G."/>
            <person name="Lindkvist-Petersson K."/>
        </authorList>
    </citation>
    <scope>INTERACTION WITH STAPHYLOCOCCUS AUREUS ENTEROTOXIN H/SEH (MICROBIAL INFECTION)</scope>
</reference>
<reference key="6">
    <citation type="journal article" date="2013" name="Nat. Rev. Immunol.">
        <title>T cell receptor signalling networks: branched, diversified and bounded.</title>
        <authorList>
            <person name="Brownlie R.J."/>
            <person name="Zamoyska R."/>
        </authorList>
    </citation>
    <scope>REVIEW ON T CELL RECEPTOR SIGNALING</scope>
</reference>
<reference key="7">
    <citation type="journal article" date="2014" name="Front. Immunol.">
        <title>Immunoglobulin and T Cell Receptor Genes: IMGT((R)) and the Birth and Rise of Immunoinformatics.</title>
        <authorList>
            <person name="Lefranc M.P."/>
        </authorList>
    </citation>
    <scope>NOMENCLATURE</scope>
</reference>
<reference key="8">
    <citation type="journal article" date="2015" name="Annu. Rev. Immunol.">
        <title>T cell antigen receptor recognition of antigen-presenting molecules.</title>
        <authorList>
            <person name="Rossjohn J."/>
            <person name="Gras S."/>
            <person name="Miles J.J."/>
            <person name="Turner S.J."/>
            <person name="Godfrey D.I."/>
            <person name="McCluskey J."/>
        </authorList>
    </citation>
    <scope>REVIEW ON FUNCTION</scope>
</reference>
<reference evidence="12 13" key="9">
    <citation type="journal article" date="2016" name="Proc. Natl. Acad. Sci. U.S.A.">
        <title>Molecular basis for universal HLA-A*0201-restricted CD8+ T-cell immunity against influenza viruses.</title>
        <authorList>
            <person name="Valkenburg S.A."/>
            <person name="Josephs T.M."/>
            <person name="Clemens E.B."/>
            <person name="Grant E.J."/>
            <person name="Nguyen T.H."/>
            <person name="Wang G.C."/>
            <person name="Price D.A."/>
            <person name="Miller A."/>
            <person name="Tong S.Y."/>
            <person name="Thomas P.G."/>
            <person name="Doherty P.C."/>
            <person name="Rossjohn J."/>
            <person name="Gras S."/>
            <person name="Kedzierska K."/>
        </authorList>
    </citation>
    <scope>X-RAY CRYSTALLOGRAPHY (2.50 ANGSTROMS) OF 20-109</scope>
    <scope>DISULFIDE BONDS</scope>
</reference>
<evidence type="ECO:0000255" key="1"/>
<evidence type="ECO:0000255" key="2">
    <source>
        <dbReference type="PROSITE-ProRule" id="PRU00114"/>
    </source>
</evidence>
<evidence type="ECO:0000269" key="3">
    <source>
    </source>
</evidence>
<evidence type="ECO:0000269" key="4">
    <source>
    </source>
</evidence>
<evidence type="ECO:0000303" key="5">
    <source>
    </source>
</evidence>
<evidence type="ECO:0000303" key="6">
    <source>
    </source>
</evidence>
<evidence type="ECO:0000303" key="7">
    <source>
    </source>
</evidence>
<evidence type="ECO:0000303" key="8">
    <source>
    </source>
</evidence>
<evidence type="ECO:0000303" key="9">
    <source>
    </source>
</evidence>
<evidence type="ECO:0000303" key="10">
    <source ref="2"/>
</evidence>
<evidence type="ECO:0000305" key="11"/>
<evidence type="ECO:0007744" key="12">
    <source>
        <dbReference type="PDB" id="5HHM"/>
    </source>
</evidence>
<evidence type="ECO:0007744" key="13">
    <source>
        <dbReference type="PDB" id="5HHO"/>
    </source>
</evidence>
<evidence type="ECO:0007829" key="14">
    <source>
        <dbReference type="PDB" id="5HHM"/>
    </source>
</evidence>
<sequence>MVLKFSVSILWIQLAWVSTQLLEQSPQFLSIQEGENLTVYCNSSSVFSSLQWYRQEPGEGPVLLVTVVTGGEVKKLKRLTFQFGDARKDSSLHITAAQTGDTGLYLCAG</sequence>
<proteinExistence type="evidence at protein level"/>
<name>TVA27_HUMAN</name>
<organism>
    <name type="scientific">Homo sapiens</name>
    <name type="common">Human</name>
    <dbReference type="NCBI Taxonomy" id="9606"/>
    <lineage>
        <taxon>Eukaryota</taxon>
        <taxon>Metazoa</taxon>
        <taxon>Chordata</taxon>
        <taxon>Craniata</taxon>
        <taxon>Vertebrata</taxon>
        <taxon>Euteleostomi</taxon>
        <taxon>Mammalia</taxon>
        <taxon>Eutheria</taxon>
        <taxon>Euarchontoglires</taxon>
        <taxon>Primates</taxon>
        <taxon>Haplorrhini</taxon>
        <taxon>Catarrhini</taxon>
        <taxon>Hominidae</taxon>
        <taxon>Homo</taxon>
    </lineage>
</organism>
<comment type="function">
    <text evidence="5 7 8 9">V region of the variable domain of T cell receptor (TR) alpha chain that participates in the antigen recognition (PubMed:24600447). Alpha-beta T cell receptors are antigen specific receptors which are essential to the immune response and are present on the cell surface of T lymphocytes. Recognize peptide-major histocompatibility (MH) (pMH) complexes that are displayed by antigen presenting cells (APC), a prerequisite for efficient T cell adaptive immunity against pathogens (PubMed:25493333). Binding of alpha-beta TR to pMH complex initiates TR-CD3 clustering on the cell surface and intracellular activation of LCK that phosphorylates the ITAM motifs of CD3G, CD3D, CD3E and CD247 enabling the recruitment of ZAP70. In turn, ZAP70 phosphorylates LAT, which recruits numerous signaling molecules to form the LAT signalosome. The LAT signalosome propagates signal branching to three major signaling pathways, the calcium, the mitogen-activated protein kinase (MAPK) kinase and the nuclear factor NF-kappa-B (NF-kB) pathways, leading to the mobilization of transcription factors that are critical for gene expression and essential for T cell growth and differentiation (PubMed:23524462). The T cell repertoire is generated in the thymus, by V-(D)-J rearrangement. This repertoire is then shaped by intrathymic selection events to generate a peripheral T cell pool of self-MH restricted, non-autoaggressive T cells. Post-thymic interaction of alpha-beta TR with the pMH complexes shapes TR structural and functional avidity (PubMed:15040585).</text>
</comment>
<comment type="subunit">
    <text evidence="6">Alpha-beta TR is a heterodimer composed of an alpha and beta chain; disulfide-linked. The alpha-beta TR is associated with the transmembrane signaling CD3 coreceptor proteins to form the TR-CD3 (TcR or TCR). The assembly of alpha-beta TR heterodimers with CD3 occurs in the endoplasmic reticulum where a single alpha-beta TR heterodimer associates with one CD3D-CD3E heterodimer, one CD3G-CD3E heterodimer and one CD247 homodimer forming a stable octameric structure. CD3D-CD3E and CD3G-CD3E heterodimers preferentially associate with TR alpha and TR beta chains, respectively. The association of the CD247 homodimer is the last step of TcR assembly in the endoplasmic reticulum and is required for transport to the cell surface.</text>
</comment>
<comment type="subunit">
    <text evidence="3">(Microbial infection) Interacts with Staphylococcus aureus enterotoxin H/entH.</text>
</comment>
<comment type="subcellular location">
    <subcellularLocation>
        <location evidence="6">Cell membrane</location>
    </subcellularLocation>
</comment>
<comment type="polymorphism">
    <text evidence="11">There are several alleles. The sequence shown is that of IMGT allele TRAV27*03.</text>
</comment>
<dbReference type="EMBL" id="AC245470">
    <property type="status" value="NOT_ANNOTATED_CDS"/>
    <property type="molecule type" value="Genomic_DNA"/>
</dbReference>
<dbReference type="PDB" id="5HHM">
    <property type="method" value="X-ray"/>
    <property type="resolution" value="2.50 A"/>
    <property type="chains" value="D/I=20-109"/>
</dbReference>
<dbReference type="PDB" id="5HHO">
    <property type="method" value="X-ray"/>
    <property type="resolution" value="2.95 A"/>
    <property type="chains" value="D=20-109"/>
</dbReference>
<dbReference type="PDBsum" id="5HHM"/>
<dbReference type="PDBsum" id="5HHO"/>
<dbReference type="SMR" id="A0A087WT01"/>
<dbReference type="FunCoup" id="A0A087WT01">
    <property type="interactions" value="265"/>
</dbReference>
<dbReference type="IMGT_GENE-DB" id="TRAV27"/>
<dbReference type="GlyCosmos" id="A0A087WT01">
    <property type="glycosylation" value="2 sites, No reported glycans"/>
</dbReference>
<dbReference type="GlyGen" id="A0A087WT01">
    <property type="glycosylation" value="2 sites"/>
</dbReference>
<dbReference type="BioMuta" id="TRAV27"/>
<dbReference type="MassIVE" id="A0A087WT01"/>
<dbReference type="Ensembl" id="ENST00000390457.2">
    <property type="protein sequence ID" value="ENSP00000451735.1"/>
    <property type="gene ID" value="ENSG00000211809.2"/>
</dbReference>
<dbReference type="UCSC" id="uc058zej.1">
    <property type="organism name" value="human"/>
</dbReference>
<dbReference type="AGR" id="HGNC:12125"/>
<dbReference type="GeneCards" id="TRAV27"/>
<dbReference type="HGNC" id="HGNC:12125">
    <property type="gene designation" value="TRAV27"/>
</dbReference>
<dbReference type="HPA" id="ENSG00000211809">
    <property type="expression patterns" value="Tissue enriched (lymphoid)"/>
</dbReference>
<dbReference type="neXtProt" id="NX_A0A087WT01"/>
<dbReference type="OpenTargets" id="ENSG00000211809"/>
<dbReference type="VEuPathDB" id="HostDB:ENSG00000211809"/>
<dbReference type="GeneTree" id="ENSGT00940000163224"/>
<dbReference type="HOGENOM" id="CLU_077975_8_3_1"/>
<dbReference type="InParanoid" id="A0A087WT01"/>
<dbReference type="OMA" id="PRFRNTQ"/>
<dbReference type="OrthoDB" id="9803478at2759"/>
<dbReference type="PAN-GO" id="A0A087WT01">
    <property type="GO annotations" value="1 GO annotation based on evolutionary models"/>
</dbReference>
<dbReference type="ChiTaRS" id="TRAV27">
    <property type="organism name" value="human"/>
</dbReference>
<dbReference type="Pharos" id="A0A087WT01">
    <property type="development level" value="Tdark"/>
</dbReference>
<dbReference type="PRO" id="PR:A0A087WT01"/>
<dbReference type="Proteomes" id="UP000005640">
    <property type="component" value="Chromosome 14"/>
</dbReference>
<dbReference type="RNAct" id="A0A087WT01">
    <property type="molecule type" value="protein"/>
</dbReference>
<dbReference type="Bgee" id="ENSG00000211809">
    <property type="expression patterns" value="Expressed in granulocyte and 91 other cell types or tissues"/>
</dbReference>
<dbReference type="GO" id="GO:0042105">
    <property type="term" value="C:alpha-beta T cell receptor complex"/>
    <property type="evidence" value="ECO:0000314"/>
    <property type="project" value="UniProtKB"/>
</dbReference>
<dbReference type="GO" id="GO:0002250">
    <property type="term" value="P:adaptive immune response"/>
    <property type="evidence" value="ECO:0007669"/>
    <property type="project" value="UniProtKB-KW"/>
</dbReference>
<dbReference type="GO" id="GO:0050830">
    <property type="term" value="P:defense response to Gram-positive bacterium"/>
    <property type="evidence" value="ECO:0000270"/>
    <property type="project" value="UniProtKB"/>
</dbReference>
<dbReference type="GO" id="GO:0006955">
    <property type="term" value="P:immune response"/>
    <property type="evidence" value="ECO:0000270"/>
    <property type="project" value="UniProtKB"/>
</dbReference>
<dbReference type="GO" id="GO:0009617">
    <property type="term" value="P:response to bacterium"/>
    <property type="evidence" value="ECO:0000318"/>
    <property type="project" value="GO_Central"/>
</dbReference>
<dbReference type="Gene3D" id="2.60.40.10">
    <property type="entry name" value="Immunoglobulins"/>
    <property type="match status" value="1"/>
</dbReference>
<dbReference type="InterPro" id="IPR007110">
    <property type="entry name" value="Ig-like_dom"/>
</dbReference>
<dbReference type="InterPro" id="IPR036179">
    <property type="entry name" value="Ig-like_dom_sf"/>
</dbReference>
<dbReference type="InterPro" id="IPR013783">
    <property type="entry name" value="Ig-like_fold"/>
</dbReference>
<dbReference type="InterPro" id="IPR013106">
    <property type="entry name" value="Ig_V-set"/>
</dbReference>
<dbReference type="InterPro" id="IPR051896">
    <property type="entry name" value="TCR_alpha_variable"/>
</dbReference>
<dbReference type="PANTHER" id="PTHR19339:SF2">
    <property type="entry name" value="T CELL RECEPTOR ALPHA VARIABLE 22"/>
    <property type="match status" value="1"/>
</dbReference>
<dbReference type="PANTHER" id="PTHR19339">
    <property type="entry name" value="T CELL RECEPTOR ALPHA VARIABLE 39"/>
    <property type="match status" value="1"/>
</dbReference>
<dbReference type="Pfam" id="PF07686">
    <property type="entry name" value="V-set"/>
    <property type="match status" value="1"/>
</dbReference>
<dbReference type="SMART" id="SM00406">
    <property type="entry name" value="IGv"/>
    <property type="match status" value="1"/>
</dbReference>
<dbReference type="SUPFAM" id="SSF48726">
    <property type="entry name" value="Immunoglobulin"/>
    <property type="match status" value="1"/>
</dbReference>
<dbReference type="PROSITE" id="PS50835">
    <property type="entry name" value="IG_LIKE"/>
    <property type="match status" value="1"/>
</dbReference>
<protein>
    <recommendedName>
        <fullName evidence="10">T cell receptor alpha variable 27</fullName>
    </recommendedName>
</protein>
<keyword id="KW-0002">3D-structure</keyword>
<keyword id="KW-1064">Adaptive immunity</keyword>
<keyword id="KW-1003">Cell membrane</keyword>
<keyword id="KW-1015">Disulfide bond</keyword>
<keyword id="KW-0325">Glycoprotein</keyword>
<keyword id="KW-0391">Immunity</keyword>
<keyword id="KW-0393">Immunoglobulin domain</keyword>
<keyword id="KW-0472">Membrane</keyword>
<keyword id="KW-1267">Proteomics identification</keyword>
<keyword id="KW-0675">Receptor</keyword>
<keyword id="KW-1185">Reference proteome</keyword>
<keyword id="KW-0732">Signal</keyword>
<keyword id="KW-1279">T cell receptor</keyword>